<proteinExistence type="evidence at transcript level"/>
<organism>
    <name type="scientific">Gallus gallus</name>
    <name type="common">Chicken</name>
    <dbReference type="NCBI Taxonomy" id="9031"/>
    <lineage>
        <taxon>Eukaryota</taxon>
        <taxon>Metazoa</taxon>
        <taxon>Chordata</taxon>
        <taxon>Craniata</taxon>
        <taxon>Vertebrata</taxon>
        <taxon>Euteleostomi</taxon>
        <taxon>Archelosauria</taxon>
        <taxon>Archosauria</taxon>
        <taxon>Dinosauria</taxon>
        <taxon>Saurischia</taxon>
        <taxon>Theropoda</taxon>
        <taxon>Coelurosauria</taxon>
        <taxon>Aves</taxon>
        <taxon>Neognathae</taxon>
        <taxon>Galloanserae</taxon>
        <taxon>Galliformes</taxon>
        <taxon>Phasianidae</taxon>
        <taxon>Phasianinae</taxon>
        <taxon>Gallus</taxon>
    </lineage>
</organism>
<dbReference type="EMBL" id="DQ129668">
    <property type="protein sequence ID" value="AAZ29617.1"/>
    <property type="molecule type" value="mRNA"/>
</dbReference>
<dbReference type="RefSeq" id="NP_001034687.1">
    <property type="nucleotide sequence ID" value="NM_001039598.1"/>
</dbReference>
<dbReference type="SMR" id="Q2LK95"/>
<dbReference type="FunCoup" id="Q2LK95">
    <property type="interactions" value="40"/>
</dbReference>
<dbReference type="STRING" id="9031.ENSGALP00000069662"/>
<dbReference type="GlyCosmos" id="Q2LK95">
    <property type="glycosylation" value="1 site, No reported glycans"/>
</dbReference>
<dbReference type="GlyGen" id="Q2LK95">
    <property type="glycosylation" value="1 site"/>
</dbReference>
<dbReference type="PaxDb" id="9031-ENSGALP00000043336"/>
<dbReference type="GeneID" id="420281"/>
<dbReference type="KEGG" id="gga:420281"/>
<dbReference type="CTD" id="10584"/>
<dbReference type="VEuPathDB" id="HostDB:geneid_420281"/>
<dbReference type="eggNOG" id="KOG4297">
    <property type="taxonomic scope" value="Eukaryota"/>
</dbReference>
<dbReference type="HOGENOM" id="CLU_049894_3_2_1"/>
<dbReference type="InParanoid" id="Q2LK95"/>
<dbReference type="OrthoDB" id="8066719at2759"/>
<dbReference type="PhylomeDB" id="Q2LK95"/>
<dbReference type="Reactome" id="R-GGA-166662">
    <property type="pathway name" value="Lectin pathway of complement activation"/>
</dbReference>
<dbReference type="Reactome" id="R-GGA-166663">
    <property type="pathway name" value="Initial triggering of complement"/>
</dbReference>
<dbReference type="PRO" id="PR:Q2LK95"/>
<dbReference type="Proteomes" id="UP000000539">
    <property type="component" value="Chromosome 2"/>
</dbReference>
<dbReference type="Bgee" id="ENSGALG00000033144">
    <property type="expression patterns" value="Expressed in liver and 11 other cell types or tissues"/>
</dbReference>
<dbReference type="GO" id="GO:0005581">
    <property type="term" value="C:collagen trimer"/>
    <property type="evidence" value="ECO:0007669"/>
    <property type="project" value="UniProtKB-KW"/>
</dbReference>
<dbReference type="GO" id="GO:0005615">
    <property type="term" value="C:extracellular space"/>
    <property type="evidence" value="ECO:0000318"/>
    <property type="project" value="GO_Central"/>
</dbReference>
<dbReference type="GO" id="GO:0005794">
    <property type="term" value="C:Golgi apparatus"/>
    <property type="evidence" value="ECO:0007669"/>
    <property type="project" value="UniProtKB-SubCell"/>
</dbReference>
<dbReference type="GO" id="GO:0005537">
    <property type="term" value="F:D-mannose binding"/>
    <property type="evidence" value="ECO:0007669"/>
    <property type="project" value="UniProtKB-KW"/>
</dbReference>
<dbReference type="CDD" id="cd03591">
    <property type="entry name" value="CLECT_collectin_like"/>
    <property type="match status" value="1"/>
</dbReference>
<dbReference type="FunFam" id="3.10.100.10:FF:000005">
    <property type="entry name" value="collectin-11 isoform X1"/>
    <property type="match status" value="1"/>
</dbReference>
<dbReference type="Gene3D" id="3.10.100.10">
    <property type="entry name" value="Mannose-Binding Protein A, subunit A"/>
    <property type="match status" value="1"/>
</dbReference>
<dbReference type="InterPro" id="IPR001304">
    <property type="entry name" value="C-type_lectin-like"/>
</dbReference>
<dbReference type="InterPro" id="IPR016186">
    <property type="entry name" value="C-type_lectin-like/link_sf"/>
</dbReference>
<dbReference type="InterPro" id="IPR018378">
    <property type="entry name" value="C-type_lectin_CS"/>
</dbReference>
<dbReference type="InterPro" id="IPR051663">
    <property type="entry name" value="CLec_Tetranectin-domain"/>
</dbReference>
<dbReference type="InterPro" id="IPR008160">
    <property type="entry name" value="Collagen"/>
</dbReference>
<dbReference type="InterPro" id="IPR033990">
    <property type="entry name" value="Collectin_CTLD"/>
</dbReference>
<dbReference type="InterPro" id="IPR016187">
    <property type="entry name" value="CTDL_fold"/>
</dbReference>
<dbReference type="PANTHER" id="PTHR22799:SF1">
    <property type="entry name" value="C-TYPE LECTIN DOMAIN FAMILY 11 MEMBER A"/>
    <property type="match status" value="1"/>
</dbReference>
<dbReference type="PANTHER" id="PTHR22799">
    <property type="entry name" value="TETRANECTIN-RELATED"/>
    <property type="match status" value="1"/>
</dbReference>
<dbReference type="Pfam" id="PF01391">
    <property type="entry name" value="Collagen"/>
    <property type="match status" value="2"/>
</dbReference>
<dbReference type="Pfam" id="PF00059">
    <property type="entry name" value="Lectin_C"/>
    <property type="match status" value="1"/>
</dbReference>
<dbReference type="SMART" id="SM00034">
    <property type="entry name" value="CLECT"/>
    <property type="match status" value="1"/>
</dbReference>
<dbReference type="SUPFAM" id="SSF56436">
    <property type="entry name" value="C-type lectin-like"/>
    <property type="match status" value="1"/>
</dbReference>
<dbReference type="PROSITE" id="PS00615">
    <property type="entry name" value="C_TYPE_LECTIN_1"/>
    <property type="match status" value="1"/>
</dbReference>
<dbReference type="PROSITE" id="PS50041">
    <property type="entry name" value="C_TYPE_LECTIN_2"/>
    <property type="match status" value="1"/>
</dbReference>
<reference key="1">
    <citation type="journal article" date="2006" name="Mol. Immunol.">
        <title>Characterization and expression sites of newly identified chicken collectins.</title>
        <authorList>
            <person name="Hogenkamp A."/>
            <person name="van Eijk M."/>
            <person name="van Dijk A."/>
            <person name="van Asten A.J.A.M."/>
            <person name="Veldhuizen E.J.A."/>
            <person name="Haagsman H.P."/>
        </authorList>
    </citation>
    <scope>NUCLEOTIDE SEQUENCE [MRNA]</scope>
    <scope>TISSUE SPECIFICITY</scope>
</reference>
<comment type="function">
    <text evidence="2">Lectin that binds to various sugars: galactose &gt; mannose = fucose &gt; N-acetylglucosamine &gt; N-acetylgalactosamine. Acts as a chemoattractant, probably involved in the regulation of cell migration.</text>
</comment>
<comment type="subcellular location">
    <subcellularLocation>
        <location evidence="2">Secreted</location>
    </subcellularLocation>
    <subcellularLocation>
        <location evidence="1">Golgi apparatus</location>
    </subcellularLocation>
    <subcellularLocation>
        <location evidence="2">Cytoplasm</location>
    </subcellularLocation>
</comment>
<comment type="tissue specificity">
    <text evidence="6">Widely expressed. Highly expressed in lung. Weakly expressed in larynx, syrinx and cranial air sac. Expressed throughout the lower gastrointestinal tract in increasing levels starting from a faint signal in duodenum and ending with relatively high signals in proctodeum, coprodeum and urodeum. In the upper part of the gastrointestinal tract, expressed in tongue, crop, and mucosa of the crop.</text>
</comment>
<comment type="similarity">
    <text evidence="7">Belongs to the COLEC10/COLEC11 family.</text>
</comment>
<name>COL10_CHICK</name>
<sequence>MSRKKEQQLRKYGTLVVLFIFQVQIFGFDVDNRPTTDVCSTHTILPGPKGDDGEKGDRGEVGKQGKVGPKGPKGNKGTVGDVGDQGMLGKIGPIGGKGDKGAKGISGVSGKKGKAGTVCDCGRYRRVVGQLNINVARLNTSIKFVKNVIAGIRETDEKFYYIVKEEKNYREALMHCRDRGGTLAMPKDEVTNALLADYISSSGLFRAFIGLNDMEKEGQFVYADSSPLQNYSNWKDGEPHDSTGHEDCVEMLSTGEWNDSECQVTIYFICEFLKKRK</sequence>
<feature type="signal peptide" evidence="3">
    <location>
        <begin position="1"/>
        <end position="27"/>
    </location>
</feature>
<feature type="chain" id="PRO_5000140434" description="Collectin-10">
    <location>
        <begin position="28"/>
        <end position="277"/>
    </location>
</feature>
<feature type="domain" description="Collagen-like">
    <location>
        <begin position="56"/>
        <end position="115"/>
    </location>
</feature>
<feature type="domain" description="C-type lectin" evidence="4">
    <location>
        <begin position="155"/>
        <end position="271"/>
    </location>
</feature>
<feature type="region of interest" description="Disordered" evidence="5">
    <location>
        <begin position="41"/>
        <end position="82"/>
    </location>
</feature>
<feature type="compositionally biased region" description="Basic and acidic residues" evidence="5">
    <location>
        <begin position="49"/>
        <end position="63"/>
    </location>
</feature>
<feature type="compositionally biased region" description="Low complexity" evidence="5">
    <location>
        <begin position="64"/>
        <end position="79"/>
    </location>
</feature>
<feature type="glycosylation site" description="N-linked (GlcNAc...) asparagine" evidence="3">
    <location>
        <position position="258"/>
    </location>
</feature>
<feature type="disulfide bond" evidence="4">
    <location>
        <begin position="176"/>
        <end position="270"/>
    </location>
</feature>
<feature type="disulfide bond" evidence="4">
    <location>
        <begin position="248"/>
        <end position="262"/>
    </location>
</feature>
<evidence type="ECO:0000250" key="1">
    <source>
        <dbReference type="UniProtKB" id="Q8CF98"/>
    </source>
</evidence>
<evidence type="ECO:0000250" key="2">
    <source>
        <dbReference type="UniProtKB" id="Q9Y6Z7"/>
    </source>
</evidence>
<evidence type="ECO:0000255" key="3"/>
<evidence type="ECO:0000255" key="4">
    <source>
        <dbReference type="PROSITE-ProRule" id="PRU00040"/>
    </source>
</evidence>
<evidence type="ECO:0000256" key="5">
    <source>
        <dbReference type="SAM" id="MobiDB-lite"/>
    </source>
</evidence>
<evidence type="ECO:0000269" key="6">
    <source>
    </source>
</evidence>
<evidence type="ECO:0000305" key="7"/>
<keyword id="KW-0106">Calcium</keyword>
<keyword id="KW-0176">Collagen</keyword>
<keyword id="KW-0963">Cytoplasm</keyword>
<keyword id="KW-1015">Disulfide bond</keyword>
<keyword id="KW-0325">Glycoprotein</keyword>
<keyword id="KW-0333">Golgi apparatus</keyword>
<keyword id="KW-0430">Lectin</keyword>
<keyword id="KW-0465">Mannose-binding</keyword>
<keyword id="KW-1185">Reference proteome</keyword>
<keyword id="KW-0964">Secreted</keyword>
<keyword id="KW-0732">Signal</keyword>
<gene>
    <name type="primary">COLEC10</name>
    <name type="synonym">CL1</name>
</gene>
<protein>
    <recommendedName>
        <fullName>Collectin-10</fullName>
    </recommendedName>
    <alternativeName>
        <fullName>Collectin-1</fullName>
        <shortName>CL-1</shortName>
        <shortName>cCL-1</shortName>
    </alternativeName>
</protein>
<accession>Q2LK95</accession>